<reference key="1">
    <citation type="journal article" date="1992" name="Cell">
        <title>Purification, cloning, and RXR identity of the HeLa cell factor with which RAR or TR heterodimerizes to bind target sequences efficiently.</title>
        <authorList>
            <person name="Leid M."/>
            <person name="Kastner P."/>
            <person name="Lyons R."/>
            <person name="Nakshatri H."/>
            <person name="Saunders M."/>
            <person name="Zacharewsi T."/>
            <person name="Chen J.Y."/>
            <person name="Staub A."/>
            <person name="Garnier J.-M."/>
            <person name="Mader S."/>
            <person name="Chambon P."/>
        </authorList>
    </citation>
    <scope>NUCLEOTIDE SEQUENCE [MRNA]</scope>
    <scope>DEVELOPMENTAL STAGE</scope>
</reference>
<reference key="2">
    <citation type="journal article" date="1992" name="Genes Dev.">
        <title>Characterization of three RXR genes that mediate the action of 9-cis retinoic acid.</title>
        <authorList>
            <person name="Mangelsdorf D.J."/>
            <person name="Borgmeyer U."/>
            <person name="Heyman R.A."/>
            <person name="Zhou J.Y."/>
            <person name="Ong E.S."/>
            <person name="Oro A.E."/>
            <person name="Kakizuka A."/>
            <person name="Evans R.M."/>
        </authorList>
    </citation>
    <scope>NUCLEOTIDE SEQUENCE [MRNA]</scope>
</reference>
<reference key="3">
    <citation type="journal article" date="1993" name="Mol. Endocrinol.">
        <title>The mouse retinoid-X receptor-gamma gene: genomic organization and evidence for functional isoforms.</title>
        <authorList>
            <person name="Liu Q."/>
            <person name="Linney E."/>
        </authorList>
    </citation>
    <scope>NUCLEOTIDE SEQUENCE [MRNA]</scope>
    <source>
        <strain>C57BL/10J</strain>
        <tissue>Skeletal muscle</tissue>
    </source>
</reference>
<reference key="4">
    <citation type="journal article" date="2004" name="Genome Res.">
        <title>The status, quality, and expansion of the NIH full-length cDNA project: the Mammalian Gene Collection (MGC).</title>
        <authorList>
            <consortium name="The MGC Project Team"/>
        </authorList>
    </citation>
    <scope>NUCLEOTIDE SEQUENCE [LARGE SCALE MRNA]</scope>
    <source>
        <strain>C57BL/6J</strain>
        <tissue>Brain</tissue>
    </source>
</reference>
<reference key="5">
    <citation type="journal article" date="2015" name="PLoS Genet.">
        <title>9-cis-13,14-Dihydroretinoic Acid Is an Endogenous Retinoid Acting as RXR Ligand in Mice.</title>
        <authorList>
            <person name="Ruehl R."/>
            <person name="Krzyzosiak A."/>
            <person name="Niewiadomska-Cimicka A."/>
            <person name="Rochel N."/>
            <person name="Szeles L."/>
            <person name="Vaz B."/>
            <person name="Wietrzych-Schindler M."/>
            <person name="Alvarez S."/>
            <person name="Szklenar M."/>
            <person name="Nagy L."/>
            <person name="de Lera A.R."/>
            <person name="Krezel W."/>
        </authorList>
    </citation>
    <scope>DISRUPTION PHENOTYPE</scope>
</reference>
<proteinExistence type="evidence at transcript level"/>
<comment type="function">
    <text evidence="1">Receptor for retinoic acid. Retinoic acid receptors bind as heterodimers to their target response elements in response to their ligands, all-trans or 9-cis retinoic acid, and regulate gene expression in various biological processes. The RAR/RXR heterodimers bind to the retinoic acid response elements (RARE) composed of tandem 5'-AGGTCA-3' sites known as DR1-DR5. The high affinity ligand for RXRs is 9-cis retinoic acid (By similarity).</text>
</comment>
<comment type="subunit">
    <text evidence="2 3">Homodimer (By similarity). Heterodimer with a RAR molecule (By similarity). Binds DNA preferentially as a RAR/RXR heterodimer (By similarity). Interacts with RARA (By similarity).</text>
</comment>
<comment type="subcellular location">
    <subcellularLocation>
        <location evidence="3">Nucleus</location>
    </subcellularLocation>
    <subcellularLocation>
        <location evidence="3">Cytoplasm</location>
    </subcellularLocation>
</comment>
<comment type="developmental stage">
    <text evidence="7">Expressed from embryo day 10.5 to birth. At day 10-13, expression in somites and the ventral horns of the spinal cord. At day 13.5, strongly expressed in the corpus striatum. At day 16.5, expression also in the pituitary with weaker expression in the neck, skeletal muscle and tongue. Expression in the corpus striatum continues until at least 7 days after birth.</text>
</comment>
<comment type="domain">
    <text>Composed of three domains: a modulating N-terminal domain, a DNA-binding domain and a C-terminal ligand-binding domain.</text>
</comment>
<comment type="PTM">
    <text evidence="3">Acetylated by EP300.</text>
</comment>
<comment type="disruption phenotype">
    <text evidence="8">Knockout mice exhibit memory deficits.</text>
</comment>
<comment type="similarity">
    <text evidence="9">Belongs to the nuclear hormone receptor family. NR2 subfamily.</text>
</comment>
<evidence type="ECO:0000250" key="1"/>
<evidence type="ECO:0000250" key="2">
    <source>
        <dbReference type="UniProtKB" id="P19793"/>
    </source>
</evidence>
<evidence type="ECO:0000250" key="3">
    <source>
        <dbReference type="UniProtKB" id="P48443"/>
    </source>
</evidence>
<evidence type="ECO:0000255" key="4">
    <source>
        <dbReference type="PROSITE-ProRule" id="PRU00407"/>
    </source>
</evidence>
<evidence type="ECO:0000255" key="5">
    <source>
        <dbReference type="PROSITE-ProRule" id="PRU01189"/>
    </source>
</evidence>
<evidence type="ECO:0000256" key="6">
    <source>
        <dbReference type="SAM" id="MobiDB-lite"/>
    </source>
</evidence>
<evidence type="ECO:0000269" key="7">
    <source>
    </source>
</evidence>
<evidence type="ECO:0000269" key="8">
    <source>
    </source>
</evidence>
<evidence type="ECO:0000305" key="9"/>
<gene>
    <name type="primary">Rxrg</name>
    <name type="synonym">Nr2b3</name>
</gene>
<sequence length="463" mass="50893">MYGNYSHFMKFPTGFGGSPGHTGSTSMSPSVALPTGKPMDSHPSYTDTPVSAPRTLSAVGTPLNALGSPYRVITSAMGPPSGALAAPPGINLVAPPSSQLNVVNSVSSSEDIKPLPGLPGIGNMNYPSTSPGSLVKHICAICGDRSSGKHYGVYSCEGCKGFFKRTIRKDLIYTCRDNKDCLIDKRQRNRCQYCRYQKCLVMGMKREAVQEERQRSRERAESEAECASSSHEDMPVERILEAELAVEPKTESYGDMNVENSTNDPVTNICHAADKQLFTLVEWAKRIPHFSDLTLEDQVILLRAGWNELLIASFSHRSVSVQDGILLATGLHVHRSSAHSAGVGSIFDRVLTELVSKMKDMQMDKSELGCLRAIVLFNPDAKGLSNPSEVETLREKVYATLEAYTKQKYPEQPGRFAKLLLRLPALRSIGLKCLEHLFFFKLIGDTPIDSFLMEMLETPLQIT</sequence>
<accession>P28705</accession>
<dbReference type="EMBL" id="M84819">
    <property type="protein sequence ID" value="AAA40082.1"/>
    <property type="molecule type" value="mRNA"/>
</dbReference>
<dbReference type="EMBL" id="X66225">
    <property type="protein sequence ID" value="CAA46964.1"/>
    <property type="molecule type" value="mRNA"/>
</dbReference>
<dbReference type="EMBL" id="S62948">
    <property type="protein sequence ID" value="AAB27244.1"/>
    <property type="molecule type" value="mRNA"/>
</dbReference>
<dbReference type="EMBL" id="BC058401">
    <property type="protein sequence ID" value="AAH58401.1"/>
    <property type="molecule type" value="mRNA"/>
</dbReference>
<dbReference type="CCDS" id="CCDS15459.1"/>
<dbReference type="PIR" id="B41727">
    <property type="entry name" value="B41727"/>
</dbReference>
<dbReference type="PIR" id="S26670">
    <property type="entry name" value="S26670"/>
</dbReference>
<dbReference type="RefSeq" id="NP_001153203.1">
    <property type="nucleotide sequence ID" value="NM_001159731.1"/>
</dbReference>
<dbReference type="RefSeq" id="NP_033133.1">
    <property type="nucleotide sequence ID" value="NM_009107.4"/>
</dbReference>
<dbReference type="SMR" id="P28705"/>
<dbReference type="BioGRID" id="203040">
    <property type="interactions" value="12"/>
</dbReference>
<dbReference type="CORUM" id="P28705"/>
<dbReference type="FunCoup" id="P28705">
    <property type="interactions" value="1103"/>
</dbReference>
<dbReference type="IntAct" id="P28705">
    <property type="interactions" value="8"/>
</dbReference>
<dbReference type="STRING" id="10090.ENSMUSP00000015987"/>
<dbReference type="BindingDB" id="P28705"/>
<dbReference type="ChEMBL" id="CHEMBL4402"/>
<dbReference type="DrugCentral" id="P28705"/>
<dbReference type="GuidetoPHARMACOLOGY" id="612"/>
<dbReference type="GlyGen" id="P28705">
    <property type="glycosylation" value="1 site, 1 O-linked glycan (1 site)"/>
</dbReference>
<dbReference type="iPTMnet" id="P28705"/>
<dbReference type="PhosphoSitePlus" id="P28705"/>
<dbReference type="PaxDb" id="10090-ENSMUSP00000015987"/>
<dbReference type="ProteomicsDB" id="256553"/>
<dbReference type="Antibodypedia" id="3620">
    <property type="antibodies" value="412 antibodies from 42 providers"/>
</dbReference>
<dbReference type="DNASU" id="20183"/>
<dbReference type="Ensembl" id="ENSMUST00000015987.10">
    <property type="protein sequence ID" value="ENSMUSP00000015987.4"/>
    <property type="gene ID" value="ENSMUSG00000015843.11"/>
</dbReference>
<dbReference type="Ensembl" id="ENSMUST00000111384.8">
    <property type="protein sequence ID" value="ENSMUSP00000107015.2"/>
    <property type="gene ID" value="ENSMUSG00000015843.11"/>
</dbReference>
<dbReference type="Ensembl" id="ENSMUST00000111386.8">
    <property type="protein sequence ID" value="ENSMUSP00000107017.2"/>
    <property type="gene ID" value="ENSMUSG00000015843.11"/>
</dbReference>
<dbReference type="GeneID" id="20183"/>
<dbReference type="KEGG" id="mmu:20183"/>
<dbReference type="UCSC" id="uc007dla.2">
    <property type="organism name" value="mouse"/>
</dbReference>
<dbReference type="AGR" id="MGI:98216"/>
<dbReference type="CTD" id="6258"/>
<dbReference type="MGI" id="MGI:98216">
    <property type="gene designation" value="Rxrg"/>
</dbReference>
<dbReference type="VEuPathDB" id="HostDB:ENSMUSG00000015843"/>
<dbReference type="eggNOG" id="KOG3575">
    <property type="taxonomic scope" value="Eukaryota"/>
</dbReference>
<dbReference type="GeneTree" id="ENSGT00940000161269"/>
<dbReference type="HOGENOM" id="CLU_007368_5_4_1"/>
<dbReference type="InParanoid" id="P28705"/>
<dbReference type="OMA" id="PNFQQMG"/>
<dbReference type="OrthoDB" id="5873264at2759"/>
<dbReference type="PhylomeDB" id="P28705"/>
<dbReference type="TreeFam" id="TF352097"/>
<dbReference type="Reactome" id="R-MMU-383280">
    <property type="pathway name" value="Nuclear Receptor transcription pathway"/>
</dbReference>
<dbReference type="Reactome" id="R-MMU-5362517">
    <property type="pathway name" value="Signaling by Retinoic Acid"/>
</dbReference>
<dbReference type="BioGRID-ORCS" id="20183">
    <property type="hits" value="4 hits in 82 CRISPR screens"/>
</dbReference>
<dbReference type="PRO" id="PR:P28705"/>
<dbReference type="Proteomes" id="UP000000589">
    <property type="component" value="Chromosome 1"/>
</dbReference>
<dbReference type="RNAct" id="P28705">
    <property type="molecule type" value="protein"/>
</dbReference>
<dbReference type="Bgee" id="ENSMUSG00000015843">
    <property type="expression patterns" value="Expressed in lumbar dorsal root ganglion and 177 other cell types or tissues"/>
</dbReference>
<dbReference type="ExpressionAtlas" id="P28705">
    <property type="expression patterns" value="baseline and differential"/>
</dbReference>
<dbReference type="GO" id="GO:0005737">
    <property type="term" value="C:cytoplasm"/>
    <property type="evidence" value="ECO:0007669"/>
    <property type="project" value="UniProtKB-SubCell"/>
</dbReference>
<dbReference type="GO" id="GO:0005634">
    <property type="term" value="C:nucleus"/>
    <property type="evidence" value="ECO:0007669"/>
    <property type="project" value="UniProtKB-SubCell"/>
</dbReference>
<dbReference type="GO" id="GO:0042802">
    <property type="term" value="F:identical protein binding"/>
    <property type="evidence" value="ECO:0000353"/>
    <property type="project" value="MGI"/>
</dbReference>
<dbReference type="GO" id="GO:0140693">
    <property type="term" value="F:molecular condensate scaffold activity"/>
    <property type="evidence" value="ECO:0007669"/>
    <property type="project" value="Ensembl"/>
</dbReference>
<dbReference type="GO" id="GO:0004879">
    <property type="term" value="F:nuclear receptor activity"/>
    <property type="evidence" value="ECO:0000314"/>
    <property type="project" value="MGI"/>
</dbReference>
<dbReference type="GO" id="GO:0003707">
    <property type="term" value="F:nuclear steroid receptor activity"/>
    <property type="evidence" value="ECO:0007669"/>
    <property type="project" value="InterPro"/>
</dbReference>
<dbReference type="GO" id="GO:0000977">
    <property type="term" value="F:RNA polymerase II transcription regulatory region sequence-specific DNA binding"/>
    <property type="evidence" value="ECO:0000314"/>
    <property type="project" value="MGI"/>
</dbReference>
<dbReference type="GO" id="GO:0043565">
    <property type="term" value="F:sequence-specific DNA binding"/>
    <property type="evidence" value="ECO:0000316"/>
    <property type="project" value="MGI"/>
</dbReference>
<dbReference type="GO" id="GO:1990837">
    <property type="term" value="F:sequence-specific double-stranded DNA binding"/>
    <property type="evidence" value="ECO:0007669"/>
    <property type="project" value="Ensembl"/>
</dbReference>
<dbReference type="GO" id="GO:0008270">
    <property type="term" value="F:zinc ion binding"/>
    <property type="evidence" value="ECO:0007669"/>
    <property type="project" value="UniProtKB-KW"/>
</dbReference>
<dbReference type="GO" id="GO:0045944">
    <property type="term" value="P:positive regulation of transcription by RNA polymerase II"/>
    <property type="evidence" value="ECO:0000314"/>
    <property type="project" value="MGI"/>
</dbReference>
<dbReference type="GO" id="GO:0048384">
    <property type="term" value="P:retinoic acid receptor signaling pathway"/>
    <property type="evidence" value="ECO:0000314"/>
    <property type="project" value="MGI"/>
</dbReference>
<dbReference type="CDD" id="cd06956">
    <property type="entry name" value="NR_DBD_RXR"/>
    <property type="match status" value="1"/>
</dbReference>
<dbReference type="CDD" id="cd06943">
    <property type="entry name" value="NR_LBD_RXR_like"/>
    <property type="match status" value="1"/>
</dbReference>
<dbReference type="FunFam" id="1.10.565.10:FF:000002">
    <property type="entry name" value="Retinoic acid receptor RXR-alpha"/>
    <property type="match status" value="1"/>
</dbReference>
<dbReference type="FunFam" id="3.30.50.10:FF:000005">
    <property type="entry name" value="Retinoic acid receptor RXR-alpha"/>
    <property type="match status" value="1"/>
</dbReference>
<dbReference type="Gene3D" id="3.30.50.10">
    <property type="entry name" value="Erythroid Transcription Factor GATA-1, subunit A"/>
    <property type="match status" value="1"/>
</dbReference>
<dbReference type="Gene3D" id="1.10.565.10">
    <property type="entry name" value="Retinoid X Receptor"/>
    <property type="match status" value="1"/>
</dbReference>
<dbReference type="InterPro" id="IPR035500">
    <property type="entry name" value="NHR-like_dom_sf"/>
</dbReference>
<dbReference type="InterPro" id="IPR021780">
    <property type="entry name" value="Nuc_recep-AF1"/>
</dbReference>
<dbReference type="InterPro" id="IPR000536">
    <property type="entry name" value="Nucl_hrmn_rcpt_lig-bd"/>
</dbReference>
<dbReference type="InterPro" id="IPR050274">
    <property type="entry name" value="Nuclear_hormone_rcpt_NR2"/>
</dbReference>
<dbReference type="InterPro" id="IPR001723">
    <property type="entry name" value="Nuclear_hrmn_rcpt"/>
</dbReference>
<dbReference type="InterPro" id="IPR000003">
    <property type="entry name" value="Retinoid-X_rcpt/HNF4"/>
</dbReference>
<dbReference type="InterPro" id="IPR001628">
    <property type="entry name" value="Znf_hrmn_rcpt"/>
</dbReference>
<dbReference type="InterPro" id="IPR013088">
    <property type="entry name" value="Znf_NHR/GATA"/>
</dbReference>
<dbReference type="PANTHER" id="PTHR24083">
    <property type="entry name" value="NUCLEAR HORMONE RECEPTOR"/>
    <property type="match status" value="1"/>
</dbReference>
<dbReference type="Pfam" id="PF00104">
    <property type="entry name" value="Hormone_recep"/>
    <property type="match status" value="1"/>
</dbReference>
<dbReference type="Pfam" id="PF11825">
    <property type="entry name" value="Nuc_recep-AF1"/>
    <property type="match status" value="1"/>
</dbReference>
<dbReference type="Pfam" id="PF00105">
    <property type="entry name" value="zf-C4"/>
    <property type="match status" value="1"/>
</dbReference>
<dbReference type="PRINTS" id="PR00545">
    <property type="entry name" value="RETINOIDXR"/>
</dbReference>
<dbReference type="PRINTS" id="PR00398">
    <property type="entry name" value="STRDHORMONER"/>
</dbReference>
<dbReference type="PRINTS" id="PR00047">
    <property type="entry name" value="STROIDFINGER"/>
</dbReference>
<dbReference type="SMART" id="SM00430">
    <property type="entry name" value="HOLI"/>
    <property type="match status" value="1"/>
</dbReference>
<dbReference type="SMART" id="SM00399">
    <property type="entry name" value="ZnF_C4"/>
    <property type="match status" value="1"/>
</dbReference>
<dbReference type="SUPFAM" id="SSF57716">
    <property type="entry name" value="Glucocorticoid receptor-like (DNA-binding domain)"/>
    <property type="match status" value="1"/>
</dbReference>
<dbReference type="SUPFAM" id="SSF48508">
    <property type="entry name" value="Nuclear receptor ligand-binding domain"/>
    <property type="match status" value="1"/>
</dbReference>
<dbReference type="PROSITE" id="PS51843">
    <property type="entry name" value="NR_LBD"/>
    <property type="match status" value="1"/>
</dbReference>
<dbReference type="PROSITE" id="PS00031">
    <property type="entry name" value="NUCLEAR_REC_DBD_1"/>
    <property type="match status" value="1"/>
</dbReference>
<dbReference type="PROSITE" id="PS51030">
    <property type="entry name" value="NUCLEAR_REC_DBD_2"/>
    <property type="match status" value="1"/>
</dbReference>
<organism>
    <name type="scientific">Mus musculus</name>
    <name type="common">Mouse</name>
    <dbReference type="NCBI Taxonomy" id="10090"/>
    <lineage>
        <taxon>Eukaryota</taxon>
        <taxon>Metazoa</taxon>
        <taxon>Chordata</taxon>
        <taxon>Craniata</taxon>
        <taxon>Vertebrata</taxon>
        <taxon>Euteleostomi</taxon>
        <taxon>Mammalia</taxon>
        <taxon>Eutheria</taxon>
        <taxon>Euarchontoglires</taxon>
        <taxon>Glires</taxon>
        <taxon>Rodentia</taxon>
        <taxon>Myomorpha</taxon>
        <taxon>Muroidea</taxon>
        <taxon>Muridae</taxon>
        <taxon>Murinae</taxon>
        <taxon>Mus</taxon>
        <taxon>Mus</taxon>
    </lineage>
</organism>
<name>RXRG_MOUSE</name>
<protein>
    <recommendedName>
        <fullName>Retinoic acid receptor RXR-gamma</fullName>
    </recommendedName>
    <alternativeName>
        <fullName>Nuclear receptor subfamily 2 group B member 3</fullName>
    </alternativeName>
    <alternativeName>
        <fullName>Retinoid X receptor gamma</fullName>
    </alternativeName>
</protein>
<feature type="chain" id="PRO_0000053577" description="Retinoic acid receptor RXR-gamma">
    <location>
        <begin position="1"/>
        <end position="463"/>
    </location>
</feature>
<feature type="domain" description="NR LBD" evidence="5">
    <location>
        <begin position="231"/>
        <end position="459"/>
    </location>
</feature>
<feature type="DNA-binding region" description="Nuclear receptor" evidence="4">
    <location>
        <begin position="139"/>
        <end position="204"/>
    </location>
</feature>
<feature type="zinc finger region" description="NR C4-type" evidence="4">
    <location>
        <begin position="139"/>
        <end position="159"/>
    </location>
</feature>
<feature type="zinc finger region" description="NR C4-type" evidence="4">
    <location>
        <begin position="175"/>
        <end position="199"/>
    </location>
</feature>
<feature type="region of interest" description="Modulating" evidence="1">
    <location>
        <begin position="1"/>
        <end position="138"/>
    </location>
</feature>
<feature type="region of interest" description="Disordered" evidence="6">
    <location>
        <begin position="16"/>
        <end position="53"/>
    </location>
</feature>
<feature type="region of interest" description="Hinge">
    <location>
        <begin position="205"/>
        <end position="230"/>
    </location>
</feature>
<feature type="region of interest" description="Disordered" evidence="6">
    <location>
        <begin position="211"/>
        <end position="232"/>
    </location>
</feature>
<feature type="compositionally biased region" description="Basic and acidic residues" evidence="6">
    <location>
        <begin position="211"/>
        <end position="222"/>
    </location>
</feature>
<feature type="sequence conflict" description="In Ref. 2; CAA46964." evidence="9" ref="2">
    <original>A</original>
    <variation>R</variation>
    <location>
        <position position="341"/>
    </location>
</feature>
<keyword id="KW-0963">Cytoplasm</keyword>
<keyword id="KW-0238">DNA-binding</keyword>
<keyword id="KW-0479">Metal-binding</keyword>
<keyword id="KW-0539">Nucleus</keyword>
<keyword id="KW-0675">Receptor</keyword>
<keyword id="KW-1185">Reference proteome</keyword>
<keyword id="KW-0804">Transcription</keyword>
<keyword id="KW-0805">Transcription regulation</keyword>
<keyword id="KW-0862">Zinc</keyword>
<keyword id="KW-0863">Zinc-finger</keyword>